<feature type="chain" id="PRO_0000093674" description="Inosine-5'-monophosphate dehydrogenase 2">
    <location>
        <begin position="1"/>
        <end position="514"/>
    </location>
</feature>
<feature type="domain" description="CBS 1" evidence="2">
    <location>
        <begin position="114"/>
        <end position="173"/>
    </location>
</feature>
<feature type="domain" description="CBS 2" evidence="2">
    <location>
        <begin position="179"/>
        <end position="237"/>
    </location>
</feature>
<feature type="active site" description="Thioimidate intermediate" evidence="2">
    <location>
        <position position="331"/>
    </location>
</feature>
<feature type="active site" description="Proton acceptor" evidence="2">
    <location>
        <position position="429"/>
    </location>
</feature>
<feature type="binding site" evidence="2">
    <location>
        <begin position="274"/>
        <end position="276"/>
    </location>
    <ligand>
        <name>NAD(+)</name>
        <dbReference type="ChEBI" id="CHEBI:57540"/>
    </ligand>
</feature>
<feature type="binding site" evidence="2">
    <location>
        <begin position="324"/>
        <end position="326"/>
    </location>
    <ligand>
        <name>NAD(+)</name>
        <dbReference type="ChEBI" id="CHEBI:57540"/>
    </ligand>
</feature>
<feature type="binding site" description="in other chain" evidence="2">
    <location>
        <position position="326"/>
    </location>
    <ligand>
        <name>K(+)</name>
        <dbReference type="ChEBI" id="CHEBI:29103"/>
        <note>ligand shared between two tetrameric partners</note>
    </ligand>
</feature>
<feature type="binding site" description="in other chain" evidence="2">
    <location>
        <position position="328"/>
    </location>
    <ligand>
        <name>K(+)</name>
        <dbReference type="ChEBI" id="CHEBI:29103"/>
        <note>ligand shared between two tetrameric partners</note>
    </ligand>
</feature>
<feature type="binding site" evidence="2">
    <location>
        <position position="329"/>
    </location>
    <ligand>
        <name>IMP</name>
        <dbReference type="ChEBI" id="CHEBI:58053"/>
    </ligand>
</feature>
<feature type="binding site" description="in other chain" evidence="2">
    <location>
        <position position="331"/>
    </location>
    <ligand>
        <name>K(+)</name>
        <dbReference type="ChEBI" id="CHEBI:29103"/>
        <note>ligand shared between two tetrameric partners</note>
    </ligand>
</feature>
<feature type="binding site" evidence="2">
    <location>
        <begin position="364"/>
        <end position="366"/>
    </location>
    <ligand>
        <name>IMP</name>
        <dbReference type="ChEBI" id="CHEBI:58053"/>
    </ligand>
</feature>
<feature type="binding site" evidence="2">
    <location>
        <begin position="387"/>
        <end position="388"/>
    </location>
    <ligand>
        <name>IMP</name>
        <dbReference type="ChEBI" id="CHEBI:58053"/>
    </ligand>
</feature>
<feature type="binding site" evidence="2">
    <location>
        <begin position="411"/>
        <end position="415"/>
    </location>
    <ligand>
        <name>IMP</name>
        <dbReference type="ChEBI" id="CHEBI:58053"/>
    </ligand>
</feature>
<feature type="binding site" evidence="2">
    <location>
        <position position="441"/>
    </location>
    <ligand>
        <name>IMP</name>
        <dbReference type="ChEBI" id="CHEBI:58053"/>
    </ligand>
</feature>
<feature type="binding site" evidence="2">
    <location>
        <position position="500"/>
    </location>
    <ligand>
        <name>K(+)</name>
        <dbReference type="ChEBI" id="CHEBI:29103"/>
        <note>ligand shared between two tetrameric partners</note>
    </ligand>
</feature>
<feature type="binding site" evidence="2">
    <location>
        <position position="501"/>
    </location>
    <ligand>
        <name>K(+)</name>
        <dbReference type="ChEBI" id="CHEBI:29103"/>
        <note>ligand shared between two tetrameric partners</note>
    </ligand>
</feature>
<feature type="binding site" evidence="2">
    <location>
        <position position="502"/>
    </location>
    <ligand>
        <name>K(+)</name>
        <dbReference type="ChEBI" id="CHEBI:29103"/>
        <note>ligand shared between two tetrameric partners</note>
    </ligand>
</feature>
<feature type="modified residue" description="Phosphoserine" evidence="1">
    <location>
        <position position="122"/>
    </location>
</feature>
<feature type="modified residue" description="Phosphoserine" evidence="1">
    <location>
        <position position="160"/>
    </location>
</feature>
<feature type="modified residue" description="Phosphotyrosine" evidence="1">
    <location>
        <position position="400"/>
    </location>
</feature>
<feature type="modified residue" description="Phosphoserine" evidence="4">
    <location>
        <position position="416"/>
    </location>
</feature>
<feature type="modified residue" description="N6-acetyllysine" evidence="1">
    <location>
        <position position="511"/>
    </location>
</feature>
<feature type="cross-link" description="Glycyl lysine isopeptide (Lys-Gly) (interchain with G-Cter in SUMO2)" evidence="1">
    <location>
        <position position="195"/>
    </location>
</feature>
<feature type="cross-link" description="Glycyl lysine isopeptide (Lys-Gly) (interchain with G-Cter in SUMO2)" evidence="1">
    <location>
        <position position="208"/>
    </location>
</feature>
<feature type="cross-link" description="Glycyl lysine isopeptide (Lys-Gly) (interchain with G-Cter in SUMO2)" evidence="1">
    <location>
        <position position="438"/>
    </location>
</feature>
<feature type="sequence variant" description="In mycophenolic acid resistant cells.">
    <original>T</original>
    <variation>I</variation>
    <location>
        <position position="333"/>
    </location>
</feature>
<feature type="sequence variant" description="In mycophenolic acid resistant cells.">
    <original>S</original>
    <variation>Y</variation>
    <location>
        <position position="351"/>
    </location>
</feature>
<feature type="sequence conflict" description="In Ref. 4; AA sequence." evidence="3" ref="4">
    <original>P</original>
    <variation>L</variation>
    <location>
        <position position="458"/>
    </location>
</feature>
<feature type="sequence conflict" description="In Ref. 4; AA sequence." evidence="3" ref="4">
    <original>Q</original>
    <variation>S</variation>
    <location>
        <position position="465"/>
    </location>
</feature>
<feature type="sequence conflict" description="In Ref. 1; AAA39311." evidence="3" ref="1">
    <original>M</original>
    <variation>T</variation>
    <location>
        <position position="483"/>
    </location>
</feature>
<gene>
    <name type="primary">Impdh2</name>
</gene>
<sequence>MADYLISGGTSYVPDDGLTAQQLFNCGDGLTYNDFLILPGYIDFTADQVDLTSALTKKITLKTPLVSSPMDTVTEAGMAIAMALTGGIGFIHHNCTPEFQANEVRKVKKYEQGFITDPVVLSPKDRVRDVFEAKARHGFCGIPITDTGRMGSRLVGIISSRDIDFLKEEEHDRFLEEIMTKREDLVVAPAGVTLKEANEILQRSKKGKLPIVNENDELVAIIARTDLKKNRDYPLASKDAKKQLLCGAAIGTHEDDKYRLDLLALAGVDVVVLDSSQGNSIFQINMIKYIKEKYPSLQVIGGNVVTAAQAKNLIDAGVDALRVGMGSGSICITQEVLACGRPQATAVYKVSEYARRFGVPVIADGGIQNVGHIAKALALGASTVMMGSLLAATTEAPGEYFFSDGIRLKKYRGMGSLDAMDKHLSSQNRYFSEADKIKVAQGVSGAVQDKGSIHKFVPYLIAGIQHSCQDIGAKSLTQVRAMMYSGELKFEKRTSSAQVEGGVHSLHSYEKRLF</sequence>
<dbReference type="EC" id="1.1.1.205" evidence="1"/>
<dbReference type="EMBL" id="M33934">
    <property type="protein sequence ID" value="AAA39311.1"/>
    <property type="molecule type" value="mRNA"/>
</dbReference>
<dbReference type="EMBL" id="M98333">
    <property type="protein sequence ID" value="AAA20181.1"/>
    <property type="molecule type" value="mRNA"/>
</dbReference>
<dbReference type="EMBL" id="BC010314">
    <property type="protein sequence ID" value="AAH10314.1"/>
    <property type="molecule type" value="mRNA"/>
</dbReference>
<dbReference type="EMBL" id="BC052671">
    <property type="protein sequence ID" value="AAH52671.1"/>
    <property type="molecule type" value="mRNA"/>
</dbReference>
<dbReference type="CCDS" id="CCDS40768.1"/>
<dbReference type="PIR" id="JT0565">
    <property type="entry name" value="JT0565"/>
</dbReference>
<dbReference type="RefSeq" id="NP_035960.2">
    <property type="nucleotide sequence ID" value="NM_011830.3"/>
</dbReference>
<dbReference type="SMR" id="P24547"/>
<dbReference type="BioGRID" id="204792">
    <property type="interactions" value="19"/>
</dbReference>
<dbReference type="FunCoup" id="P24547">
    <property type="interactions" value="3584"/>
</dbReference>
<dbReference type="IntAct" id="P24547">
    <property type="interactions" value="3"/>
</dbReference>
<dbReference type="MINT" id="P24547"/>
<dbReference type="STRING" id="10090.ENSMUSP00000079888"/>
<dbReference type="BindingDB" id="P24547"/>
<dbReference type="ChEMBL" id="CHEMBL3169"/>
<dbReference type="GlyGen" id="P24547">
    <property type="glycosylation" value="1 site, 1 O-linked glycan (1 site)"/>
</dbReference>
<dbReference type="iPTMnet" id="P24547"/>
<dbReference type="PhosphoSitePlus" id="P24547"/>
<dbReference type="SwissPalm" id="P24547"/>
<dbReference type="REPRODUCTION-2DPAGE" id="P24547"/>
<dbReference type="jPOST" id="P24547"/>
<dbReference type="PaxDb" id="10090-ENSMUSP00000079888"/>
<dbReference type="PeptideAtlas" id="P24547"/>
<dbReference type="ProteomicsDB" id="269310"/>
<dbReference type="Pumba" id="P24547"/>
<dbReference type="Antibodypedia" id="30367">
    <property type="antibodies" value="398 antibodies from 38 providers"/>
</dbReference>
<dbReference type="DNASU" id="23918"/>
<dbReference type="Ensembl" id="ENSMUST00000081111.14">
    <property type="protein sequence ID" value="ENSMUSP00000079888.9"/>
    <property type="gene ID" value="ENSMUSG00000062867.14"/>
</dbReference>
<dbReference type="GeneID" id="23918"/>
<dbReference type="KEGG" id="mmu:23918"/>
<dbReference type="UCSC" id="uc009rqg.1">
    <property type="organism name" value="mouse"/>
</dbReference>
<dbReference type="AGR" id="MGI:109367"/>
<dbReference type="CTD" id="3615"/>
<dbReference type="MGI" id="MGI:109367">
    <property type="gene designation" value="Impdh2"/>
</dbReference>
<dbReference type="VEuPathDB" id="HostDB:ENSMUSG00000062867"/>
<dbReference type="eggNOG" id="KOG2550">
    <property type="taxonomic scope" value="Eukaryota"/>
</dbReference>
<dbReference type="GeneTree" id="ENSGT00940000157726"/>
<dbReference type="InParanoid" id="P24547"/>
<dbReference type="OMA" id="PGSHCTT"/>
<dbReference type="OrthoDB" id="416622at2759"/>
<dbReference type="PhylomeDB" id="P24547"/>
<dbReference type="TreeFam" id="TF300378"/>
<dbReference type="BRENDA" id="1.1.1.205">
    <property type="organism ID" value="3474"/>
</dbReference>
<dbReference type="Reactome" id="R-MMU-6798695">
    <property type="pathway name" value="Neutrophil degranulation"/>
</dbReference>
<dbReference type="Reactome" id="R-MMU-73817">
    <property type="pathway name" value="Purine ribonucleoside monophosphate biosynthesis"/>
</dbReference>
<dbReference type="Reactome" id="R-MMU-9748787">
    <property type="pathway name" value="Azathioprine ADME"/>
</dbReference>
<dbReference type="UniPathway" id="UPA00601">
    <property type="reaction ID" value="UER00295"/>
</dbReference>
<dbReference type="BioGRID-ORCS" id="23918">
    <property type="hits" value="26 hits in 79 CRISPR screens"/>
</dbReference>
<dbReference type="ChiTaRS" id="Impdh2">
    <property type="organism name" value="mouse"/>
</dbReference>
<dbReference type="PRO" id="PR:P24547"/>
<dbReference type="Proteomes" id="UP000000589">
    <property type="component" value="Chromosome 9"/>
</dbReference>
<dbReference type="RNAct" id="P24547">
    <property type="molecule type" value="protein"/>
</dbReference>
<dbReference type="Bgee" id="ENSMUSG00000062867">
    <property type="expression patterns" value="Expressed in blastoderm cell in morula and 102 other cell types or tissues"/>
</dbReference>
<dbReference type="ExpressionAtlas" id="P24547">
    <property type="expression patterns" value="baseline and differential"/>
</dbReference>
<dbReference type="GO" id="GO:0005737">
    <property type="term" value="C:cytoplasm"/>
    <property type="evidence" value="ECO:0000250"/>
    <property type="project" value="UniProtKB"/>
</dbReference>
<dbReference type="GO" id="GO:0005829">
    <property type="term" value="C:cytosol"/>
    <property type="evidence" value="ECO:0000250"/>
    <property type="project" value="UniProtKB"/>
</dbReference>
<dbReference type="GO" id="GO:0005634">
    <property type="term" value="C:nucleus"/>
    <property type="evidence" value="ECO:0000250"/>
    <property type="project" value="UniProtKB"/>
</dbReference>
<dbReference type="GO" id="GO:0003677">
    <property type="term" value="F:DNA binding"/>
    <property type="evidence" value="ECO:0007669"/>
    <property type="project" value="UniProtKB-KW"/>
</dbReference>
<dbReference type="GO" id="GO:0003938">
    <property type="term" value="F:IMP dehydrogenase activity"/>
    <property type="evidence" value="ECO:0000314"/>
    <property type="project" value="MGI"/>
</dbReference>
<dbReference type="GO" id="GO:0046872">
    <property type="term" value="F:metal ion binding"/>
    <property type="evidence" value="ECO:0007669"/>
    <property type="project" value="UniProtKB-UniRule"/>
</dbReference>
<dbReference type="GO" id="GO:0000166">
    <property type="term" value="F:nucleotide binding"/>
    <property type="evidence" value="ECO:0000250"/>
    <property type="project" value="UniProtKB"/>
</dbReference>
<dbReference type="GO" id="GO:0003723">
    <property type="term" value="F:RNA binding"/>
    <property type="evidence" value="ECO:0007669"/>
    <property type="project" value="UniProtKB-KW"/>
</dbReference>
<dbReference type="GO" id="GO:0097294">
    <property type="term" value="P:'de novo' XMP biosynthetic process"/>
    <property type="evidence" value="ECO:0000315"/>
    <property type="project" value="MGI"/>
</dbReference>
<dbReference type="GO" id="GO:0071353">
    <property type="term" value="P:cellular response to interleukin-4"/>
    <property type="evidence" value="ECO:0000314"/>
    <property type="project" value="MGI"/>
</dbReference>
<dbReference type="GO" id="GO:0007623">
    <property type="term" value="P:circadian rhythm"/>
    <property type="evidence" value="ECO:0000250"/>
    <property type="project" value="UniProtKB"/>
</dbReference>
<dbReference type="GO" id="GO:0006177">
    <property type="term" value="P:GMP biosynthetic process"/>
    <property type="evidence" value="ECO:0000314"/>
    <property type="project" value="MGI"/>
</dbReference>
<dbReference type="GO" id="GO:0032263">
    <property type="term" value="P:GMP salvage"/>
    <property type="evidence" value="ECO:0000304"/>
    <property type="project" value="MGI"/>
</dbReference>
<dbReference type="GO" id="GO:0006183">
    <property type="term" value="P:GTP biosynthetic process"/>
    <property type="evidence" value="ECO:0000250"/>
    <property type="project" value="UniProtKB"/>
</dbReference>
<dbReference type="GO" id="GO:0046651">
    <property type="term" value="P:lymphocyte proliferation"/>
    <property type="evidence" value="ECO:0000315"/>
    <property type="project" value="MGI"/>
</dbReference>
<dbReference type="GO" id="GO:0006164">
    <property type="term" value="P:purine nucleotide biosynthetic process"/>
    <property type="evidence" value="ECO:0000315"/>
    <property type="project" value="MGI"/>
</dbReference>
<dbReference type="CDD" id="cd04601">
    <property type="entry name" value="CBS_pair_IMPDH"/>
    <property type="match status" value="1"/>
</dbReference>
<dbReference type="CDD" id="cd00381">
    <property type="entry name" value="IMPDH"/>
    <property type="match status" value="1"/>
</dbReference>
<dbReference type="FunFam" id="3.20.20.70:FF:000424">
    <property type="entry name" value="Inosine-5'-monophosphate dehydrogenase 2"/>
    <property type="match status" value="2"/>
</dbReference>
<dbReference type="Gene3D" id="3.20.20.70">
    <property type="entry name" value="Aldolase class I"/>
    <property type="match status" value="1"/>
</dbReference>
<dbReference type="HAMAP" id="MF_01964">
    <property type="entry name" value="IMPDH"/>
    <property type="match status" value="1"/>
</dbReference>
<dbReference type="InterPro" id="IPR013785">
    <property type="entry name" value="Aldolase_TIM"/>
</dbReference>
<dbReference type="InterPro" id="IPR000644">
    <property type="entry name" value="CBS_dom"/>
</dbReference>
<dbReference type="InterPro" id="IPR005990">
    <property type="entry name" value="IMP_DH"/>
</dbReference>
<dbReference type="InterPro" id="IPR015875">
    <property type="entry name" value="IMP_DH/GMP_Rdtase_CS"/>
</dbReference>
<dbReference type="InterPro" id="IPR001093">
    <property type="entry name" value="IMP_DH_GMPRt"/>
</dbReference>
<dbReference type="NCBIfam" id="TIGR01302">
    <property type="entry name" value="IMP_dehydrog"/>
    <property type="match status" value="1"/>
</dbReference>
<dbReference type="PANTHER" id="PTHR11911:SF121">
    <property type="entry name" value="INOSINE-5'-MONOPHOSPHATE DEHYDROGENASE 2"/>
    <property type="match status" value="1"/>
</dbReference>
<dbReference type="PANTHER" id="PTHR11911">
    <property type="entry name" value="INOSINE-5-MONOPHOSPHATE DEHYDROGENASE RELATED"/>
    <property type="match status" value="1"/>
</dbReference>
<dbReference type="Pfam" id="PF00571">
    <property type="entry name" value="CBS"/>
    <property type="match status" value="2"/>
</dbReference>
<dbReference type="Pfam" id="PF00478">
    <property type="entry name" value="IMPDH"/>
    <property type="match status" value="1"/>
</dbReference>
<dbReference type="PIRSF" id="PIRSF000130">
    <property type="entry name" value="IMPDH"/>
    <property type="match status" value="1"/>
</dbReference>
<dbReference type="SMART" id="SM00116">
    <property type="entry name" value="CBS"/>
    <property type="match status" value="2"/>
</dbReference>
<dbReference type="SMART" id="SM01240">
    <property type="entry name" value="IMPDH"/>
    <property type="match status" value="1"/>
</dbReference>
<dbReference type="SUPFAM" id="SSF51412">
    <property type="entry name" value="Inosine monophosphate dehydrogenase (IMPDH)"/>
    <property type="match status" value="2"/>
</dbReference>
<dbReference type="PROSITE" id="PS51371">
    <property type="entry name" value="CBS"/>
    <property type="match status" value="2"/>
</dbReference>
<dbReference type="PROSITE" id="PS00487">
    <property type="entry name" value="IMP_DH_GMP_RED"/>
    <property type="match status" value="1"/>
</dbReference>
<organism>
    <name type="scientific">Mus musculus</name>
    <name type="common">Mouse</name>
    <dbReference type="NCBI Taxonomy" id="10090"/>
    <lineage>
        <taxon>Eukaryota</taxon>
        <taxon>Metazoa</taxon>
        <taxon>Chordata</taxon>
        <taxon>Craniata</taxon>
        <taxon>Vertebrata</taxon>
        <taxon>Euteleostomi</taxon>
        <taxon>Mammalia</taxon>
        <taxon>Eutheria</taxon>
        <taxon>Euarchontoglires</taxon>
        <taxon>Glires</taxon>
        <taxon>Rodentia</taxon>
        <taxon>Myomorpha</taxon>
        <taxon>Muroidea</taxon>
        <taxon>Muridae</taxon>
        <taxon>Murinae</taxon>
        <taxon>Mus</taxon>
        <taxon>Mus</taxon>
    </lineage>
</organism>
<comment type="function">
    <text evidence="1">Catalyzes the conversion of inosine 5'-phosphate (IMP) to xanthosine 5'-phosphate (XMP), the first committed and rate-limiting step in the de novo synthesis of guanine nucleotides, and therefore plays an important role in the regulation of cell growth. Could also have a single-stranded nucleic acid-binding activity and could play a role in RNA and/or DNA metabolism. It may also have a role in the development of malignancy and the growth progression of some tumors.</text>
</comment>
<comment type="catalytic activity">
    <reaction evidence="1">
        <text>IMP + NAD(+) + H2O = XMP + NADH + H(+)</text>
        <dbReference type="Rhea" id="RHEA:11708"/>
        <dbReference type="ChEBI" id="CHEBI:15377"/>
        <dbReference type="ChEBI" id="CHEBI:15378"/>
        <dbReference type="ChEBI" id="CHEBI:57464"/>
        <dbReference type="ChEBI" id="CHEBI:57540"/>
        <dbReference type="ChEBI" id="CHEBI:57945"/>
        <dbReference type="ChEBI" id="CHEBI:58053"/>
        <dbReference type="EC" id="1.1.1.205"/>
    </reaction>
</comment>
<comment type="cofactor">
    <cofactor evidence="2">
        <name>K(+)</name>
        <dbReference type="ChEBI" id="CHEBI:29103"/>
    </cofactor>
</comment>
<comment type="activity regulation">
    <text evidence="2">Mycophenolic acid (MPA) is a non-competitive inhibitor that prevents formation of the closed enzyme conformation by binding to the same site as the amobile flap. In contrast, mizoribine monophosphate (MZP) is a competitive inhibitor that induces the closed conformation. MPA is a potent inhibitor of mammalian IMPDHs but a poor inhibitor of the bacterial enzymes. MZP is a more potent inhibitor of bacterial IMPDH.</text>
</comment>
<comment type="pathway">
    <text evidence="1">Purine metabolism; XMP biosynthesis via de novo pathway; XMP from IMP: step 1/1.</text>
</comment>
<comment type="subunit">
    <text evidence="1">Homotetramer. Interacts with CLOCK; in a circadian manner. Interacts with ANKRD9; leading to its ubiquitination and degradation by the proteasome.</text>
</comment>
<comment type="subcellular location">
    <subcellularLocation>
        <location evidence="1">Cytoplasm</location>
    </subcellularLocation>
    <subcellularLocation>
        <location evidence="1">Nucleus</location>
    </subcellularLocation>
    <subcellularLocation>
        <location evidence="1">Cytoplasm</location>
        <location evidence="1">Cytosol</location>
    </subcellularLocation>
    <text evidence="1">Can form fiber-like subcellular structures termed 'cytoophidia' in response to intracellular guanine-nucleotide depletion.</text>
</comment>
<comment type="PTM">
    <text evidence="1">Acetylated by CLOCK in a circadian manner.</text>
</comment>
<comment type="PTM">
    <text evidence="1">Ubiquitinated leading to its degradation by the proteasome.</text>
</comment>
<comment type="similarity">
    <text evidence="2">Belongs to the IMPDH/GMPR family.</text>
</comment>
<proteinExistence type="evidence at protein level"/>
<name>IMDH2_MOUSE</name>
<accession>P24547</accession>
<accession>Q61734</accession>
<accession>Q91Z11</accession>
<keyword id="KW-0007">Acetylation</keyword>
<keyword id="KW-0129">CBS domain</keyword>
<keyword id="KW-0963">Cytoplasm</keyword>
<keyword id="KW-0903">Direct protein sequencing</keyword>
<keyword id="KW-0238">DNA-binding</keyword>
<keyword id="KW-0332">GMP biosynthesis</keyword>
<keyword id="KW-1017">Isopeptide bond</keyword>
<keyword id="KW-0479">Metal-binding</keyword>
<keyword id="KW-0520">NAD</keyword>
<keyword id="KW-0539">Nucleus</keyword>
<keyword id="KW-0560">Oxidoreductase</keyword>
<keyword id="KW-0597">Phosphoprotein</keyword>
<keyword id="KW-0630">Potassium</keyword>
<keyword id="KW-0658">Purine biosynthesis</keyword>
<keyword id="KW-1185">Reference proteome</keyword>
<keyword id="KW-0677">Repeat</keyword>
<keyword id="KW-0694">RNA-binding</keyword>
<keyword id="KW-0832">Ubl conjugation</keyword>
<protein>
    <recommendedName>
        <fullName evidence="2">Inosine-5'-monophosphate dehydrogenase 2</fullName>
        <shortName evidence="2">IMP dehydrogenase 2</shortName>
        <shortName evidence="2">IMPD 2</shortName>
        <shortName evidence="2">IMPDH 2</shortName>
        <ecNumber evidence="1">1.1.1.205</ecNumber>
    </recommendedName>
    <alternativeName>
        <fullName>IMPDH-II</fullName>
    </alternativeName>
</protein>
<reference key="1">
    <citation type="journal article" date="1991" name="Gene">
        <title>Isolation and sequence of a cDNA encoding mouse IMP dehydrogenase.</title>
        <authorList>
            <person name="Tiedeman A.A."/>
            <person name="Smith J.M."/>
        </authorList>
    </citation>
    <scope>NUCLEOTIDE SEQUENCE [MRNA]</scope>
</reference>
<reference key="2">
    <citation type="journal article" date="1994" name="Biochim. Biophys. Acta">
        <title>Gene amplification and dual point mutations of mouse IMP dehydrogenase associated with cellular resistance to mycophenolic acid.</title>
        <authorList>
            <person name="Lightfoot T."/>
            <person name="Snyder F.F."/>
        </authorList>
    </citation>
    <scope>NUCLEOTIDE SEQUENCE [MRNA]</scope>
    <scope>VARIANTS MYCOPHENOLIC ACID RESISTANT</scope>
    <source>
        <tissue>Brain</tissue>
    </source>
</reference>
<reference key="3">
    <citation type="journal article" date="2004" name="Genome Res.">
        <title>The status, quality, and expansion of the NIH full-length cDNA project: the Mammalian Gene Collection (MGC).</title>
        <authorList>
            <consortium name="The MGC Project Team"/>
        </authorList>
    </citation>
    <scope>NUCLEOTIDE SEQUENCE [LARGE SCALE MRNA]</scope>
    <source>
        <strain>C3H/He</strain>
        <strain>Czech II</strain>
        <tissue>Mammary gland</tissue>
        <tissue>Osteoblast</tissue>
    </source>
</reference>
<reference key="4">
    <citation type="journal article" date="1989" name="J. Biol. Chem.">
        <title>Increased activity, amount, and altered kinetic properties of IMP dehydrogenase from mycophenolic acid-resistant neuroblastoma cells.</title>
        <authorList>
            <person name="Hodges S.D."/>
            <person name="Fung E."/>
            <person name="McKay D.J."/>
            <person name="Renaux B.S."/>
            <person name="Snyder F.F."/>
        </authorList>
    </citation>
    <scope>PROTEIN SEQUENCE OF 125-133; 182-194; 289-290; 439-449; 456-466 AND 475-478</scope>
</reference>
<reference key="5">
    <citation type="submission" date="2007-07" db="UniProtKB">
        <authorList>
            <person name="Lubec G."/>
            <person name="Yang J.W."/>
            <person name="Zigmond M."/>
        </authorList>
    </citation>
    <scope>PROTEIN SEQUENCE OF 137-149</scope>
    <source>
        <tissue>Brain</tissue>
    </source>
</reference>
<reference key="6">
    <citation type="journal article" date="2010" name="Cell">
        <title>A tissue-specific atlas of mouse protein phosphorylation and expression.</title>
        <authorList>
            <person name="Huttlin E.L."/>
            <person name="Jedrychowski M.P."/>
            <person name="Elias J.E."/>
            <person name="Goswami T."/>
            <person name="Rad R."/>
            <person name="Beausoleil S.A."/>
            <person name="Villen J."/>
            <person name="Haas W."/>
            <person name="Sowa M.E."/>
            <person name="Gygi S.P."/>
        </authorList>
    </citation>
    <scope>PHOSPHORYLATION [LARGE SCALE ANALYSIS] AT SER-416</scope>
    <scope>IDENTIFICATION BY MASS SPECTROMETRY [LARGE SCALE ANALYSIS]</scope>
    <source>
        <tissue>Brain</tissue>
        <tissue>Brown adipose tissue</tissue>
        <tissue>Heart</tissue>
        <tissue>Kidney</tissue>
        <tissue>Liver</tissue>
        <tissue>Lung</tissue>
        <tissue>Pancreas</tissue>
        <tissue>Spleen</tissue>
        <tissue>Testis</tissue>
    </source>
</reference>
<evidence type="ECO:0000250" key="1">
    <source>
        <dbReference type="UniProtKB" id="P12268"/>
    </source>
</evidence>
<evidence type="ECO:0000255" key="2">
    <source>
        <dbReference type="HAMAP-Rule" id="MF_03156"/>
    </source>
</evidence>
<evidence type="ECO:0000305" key="3"/>
<evidence type="ECO:0007744" key="4">
    <source>
    </source>
</evidence>